<reference key="1">
    <citation type="thesis" date="1997" institute="Queen's University / Kingston" country="Canada">
        <title>Hic Sunt Serpentes -- molecular phylogenetics and the Boidae (Serpentes: Booidea).</title>
        <authorList>
            <person name="Campbell B.N."/>
        </authorList>
    </citation>
    <scope>NUCLEOTIDE SEQUENCE [GENOMIC DNA]</scope>
</reference>
<gene>
    <name type="primary">MT-CYB</name>
    <name type="synonym">COB</name>
    <name type="synonym">CYTB</name>
    <name type="synonym">MTCYB</name>
</gene>
<feature type="chain" id="PRO_0000060925" description="Cytochrome b">
    <location>
        <begin position="1"/>
        <end position="370"/>
    </location>
</feature>
<feature type="transmembrane region" description="Helical" evidence="2">
    <location>
        <begin position="25"/>
        <end position="45"/>
    </location>
</feature>
<feature type="transmembrane region" description="Helical" evidence="2">
    <location>
        <begin position="69"/>
        <end position="90"/>
    </location>
</feature>
<feature type="transmembrane region" description="Helical" evidence="2">
    <location>
        <begin position="105"/>
        <end position="125"/>
    </location>
</feature>
<feature type="transmembrane region" description="Helical" evidence="2">
    <location>
        <begin position="170"/>
        <end position="190"/>
    </location>
</feature>
<feature type="transmembrane region" description="Helical" evidence="2">
    <location>
        <begin position="218"/>
        <end position="238"/>
    </location>
</feature>
<feature type="transmembrane region" description="Helical" evidence="2">
    <location>
        <begin position="280"/>
        <end position="300"/>
    </location>
</feature>
<feature type="transmembrane region" description="Helical" evidence="2">
    <location>
        <begin position="312"/>
        <end position="332"/>
    </location>
</feature>
<feature type="transmembrane region" description="Helical" evidence="2">
    <location>
        <begin position="339"/>
        <end position="358"/>
    </location>
</feature>
<feature type="binding site" description="axial binding residue" evidence="2">
    <location>
        <position position="75"/>
    </location>
    <ligand>
        <name>heme b</name>
        <dbReference type="ChEBI" id="CHEBI:60344"/>
        <label>b562</label>
    </ligand>
    <ligandPart>
        <name>Fe</name>
        <dbReference type="ChEBI" id="CHEBI:18248"/>
    </ligandPart>
</feature>
<feature type="binding site" description="axial binding residue" evidence="2">
    <location>
        <position position="89"/>
    </location>
    <ligand>
        <name>heme b</name>
        <dbReference type="ChEBI" id="CHEBI:60344"/>
        <label>b566</label>
    </ligand>
    <ligandPart>
        <name>Fe</name>
        <dbReference type="ChEBI" id="CHEBI:18248"/>
    </ligandPart>
</feature>
<feature type="binding site" description="axial binding residue" evidence="2">
    <location>
        <position position="174"/>
    </location>
    <ligand>
        <name>heme b</name>
        <dbReference type="ChEBI" id="CHEBI:60344"/>
        <label>b562</label>
    </ligand>
    <ligandPart>
        <name>Fe</name>
        <dbReference type="ChEBI" id="CHEBI:18248"/>
    </ligandPart>
</feature>
<feature type="binding site" description="axial binding residue" evidence="2">
    <location>
        <position position="188"/>
    </location>
    <ligand>
        <name>heme b</name>
        <dbReference type="ChEBI" id="CHEBI:60344"/>
        <label>b566</label>
    </ligand>
    <ligandPart>
        <name>Fe</name>
        <dbReference type="ChEBI" id="CHEBI:18248"/>
    </ligandPart>
</feature>
<feature type="binding site" evidence="2">
    <location>
        <position position="193"/>
    </location>
    <ligand>
        <name>a ubiquinone</name>
        <dbReference type="ChEBI" id="CHEBI:16389"/>
    </ligand>
</feature>
<comment type="function">
    <text evidence="2">Component of the ubiquinol-cytochrome c reductase complex (complex III or cytochrome b-c1 complex) that is part of the mitochondrial respiratory chain. The b-c1 complex mediates electron transfer from ubiquinol to cytochrome c. Contributes to the generation of a proton gradient across the mitochondrial membrane that is then used for ATP synthesis.</text>
</comment>
<comment type="cofactor">
    <cofactor evidence="2">
        <name>heme b</name>
        <dbReference type="ChEBI" id="CHEBI:60344"/>
    </cofactor>
    <text evidence="2">Binds 2 heme b groups non-covalently.</text>
</comment>
<comment type="subunit">
    <text evidence="2">The cytochrome bc1 complex contains 3 respiratory subunits (MT-CYB, CYC1 and UQCRFS1), 2 core proteins (UQCRC1 and UQCRC2) and probably 6 low-molecular weight proteins.</text>
</comment>
<comment type="subcellular location">
    <subcellularLocation>
        <location evidence="2">Mitochondrion inner membrane</location>
        <topology evidence="2">Multi-pass membrane protein</topology>
    </subcellularLocation>
</comment>
<comment type="miscellaneous">
    <text evidence="1">Heme 1 (or BL or b562) is low-potential and absorbs at about 562 nm, and heme 2 (or BH or b566) is high-potential and absorbs at about 566 nm.</text>
</comment>
<comment type="similarity">
    <text evidence="3 4">Belongs to the cytochrome b family.</text>
</comment>
<comment type="caution">
    <text evidence="2">The full-length protein contains only eight transmembrane helices, not nine as predicted by bioinformatics tools.</text>
</comment>
<geneLocation type="mitochondrion"/>
<protein>
    <recommendedName>
        <fullName>Cytochrome b</fullName>
    </recommendedName>
    <alternativeName>
        <fullName>Complex III subunit 3</fullName>
    </alternativeName>
    <alternativeName>
        <fullName>Complex III subunit III</fullName>
    </alternativeName>
    <alternativeName>
        <fullName>Cytochrome b-c1 complex subunit 3</fullName>
    </alternativeName>
    <alternativeName>
        <fullName>Ubiquinol-cytochrome-c reductase complex cytochrome b subunit</fullName>
    </alternativeName>
</protein>
<evidence type="ECO:0000250" key="1"/>
<evidence type="ECO:0000250" key="2">
    <source>
        <dbReference type="UniProtKB" id="P00157"/>
    </source>
</evidence>
<evidence type="ECO:0000255" key="3">
    <source>
        <dbReference type="PROSITE-ProRule" id="PRU00967"/>
    </source>
</evidence>
<evidence type="ECO:0000255" key="4">
    <source>
        <dbReference type="PROSITE-ProRule" id="PRU00968"/>
    </source>
</evidence>
<organism>
    <name type="scientific">Chilabothrus fordii</name>
    <name type="common">Ford's boa</name>
    <name type="synonym">Epicrates fordii</name>
    <dbReference type="NCBI Taxonomy" id="51746"/>
    <lineage>
        <taxon>Eukaryota</taxon>
        <taxon>Metazoa</taxon>
        <taxon>Chordata</taxon>
        <taxon>Craniata</taxon>
        <taxon>Vertebrata</taxon>
        <taxon>Euteleostomi</taxon>
        <taxon>Lepidosauria</taxon>
        <taxon>Squamata</taxon>
        <taxon>Bifurcata</taxon>
        <taxon>Unidentata</taxon>
        <taxon>Episquamata</taxon>
        <taxon>Toxicofera</taxon>
        <taxon>Serpentes</taxon>
        <taxon>Henophidia</taxon>
        <taxon>Boidae</taxon>
        <taxon>Boinae</taxon>
        <taxon>Chilabothrus</taxon>
    </lineage>
</organism>
<accession>O48049</accession>
<name>CYB_CHIFO</name>
<keyword id="KW-0249">Electron transport</keyword>
<keyword id="KW-0349">Heme</keyword>
<keyword id="KW-0408">Iron</keyword>
<keyword id="KW-0472">Membrane</keyword>
<keyword id="KW-0479">Metal-binding</keyword>
<keyword id="KW-0496">Mitochondrion</keyword>
<keyword id="KW-0999">Mitochondrion inner membrane</keyword>
<keyword id="KW-0679">Respiratory chain</keyword>
<keyword id="KW-0812">Transmembrane</keyword>
<keyword id="KW-1133">Transmembrane helix</keyword>
<keyword id="KW-0813">Transport</keyword>
<keyword id="KW-0830">Ubiquinone</keyword>
<proteinExistence type="inferred from homology"/>
<dbReference type="EMBL" id="U69784">
    <property type="protein sequence ID" value="AAC01827.1"/>
    <property type="molecule type" value="Genomic_DNA"/>
</dbReference>
<dbReference type="SMR" id="O48049"/>
<dbReference type="GO" id="GO:0005743">
    <property type="term" value="C:mitochondrial inner membrane"/>
    <property type="evidence" value="ECO:0007669"/>
    <property type="project" value="UniProtKB-SubCell"/>
</dbReference>
<dbReference type="GO" id="GO:0045275">
    <property type="term" value="C:respiratory chain complex III"/>
    <property type="evidence" value="ECO:0007669"/>
    <property type="project" value="InterPro"/>
</dbReference>
<dbReference type="GO" id="GO:0046872">
    <property type="term" value="F:metal ion binding"/>
    <property type="evidence" value="ECO:0007669"/>
    <property type="project" value="UniProtKB-KW"/>
</dbReference>
<dbReference type="GO" id="GO:0008121">
    <property type="term" value="F:ubiquinol-cytochrome-c reductase activity"/>
    <property type="evidence" value="ECO:0007669"/>
    <property type="project" value="InterPro"/>
</dbReference>
<dbReference type="GO" id="GO:0006122">
    <property type="term" value="P:mitochondrial electron transport, ubiquinol to cytochrome c"/>
    <property type="evidence" value="ECO:0007669"/>
    <property type="project" value="TreeGrafter"/>
</dbReference>
<dbReference type="CDD" id="cd00290">
    <property type="entry name" value="cytochrome_b_C"/>
    <property type="match status" value="1"/>
</dbReference>
<dbReference type="CDD" id="cd00284">
    <property type="entry name" value="Cytochrome_b_N"/>
    <property type="match status" value="1"/>
</dbReference>
<dbReference type="Gene3D" id="1.20.810.10">
    <property type="entry name" value="Cytochrome Bc1 Complex, Chain C"/>
    <property type="match status" value="1"/>
</dbReference>
<dbReference type="InterPro" id="IPR005798">
    <property type="entry name" value="Cyt_b/b6_C"/>
</dbReference>
<dbReference type="InterPro" id="IPR036150">
    <property type="entry name" value="Cyt_b/b6_C_sf"/>
</dbReference>
<dbReference type="InterPro" id="IPR005797">
    <property type="entry name" value="Cyt_b/b6_N"/>
</dbReference>
<dbReference type="InterPro" id="IPR027387">
    <property type="entry name" value="Cytb/b6-like_sf"/>
</dbReference>
<dbReference type="InterPro" id="IPR030689">
    <property type="entry name" value="Cytochrome_b"/>
</dbReference>
<dbReference type="InterPro" id="IPR048260">
    <property type="entry name" value="Cytochrome_b_C_euk/bac"/>
</dbReference>
<dbReference type="InterPro" id="IPR048259">
    <property type="entry name" value="Cytochrome_b_N_euk/bac"/>
</dbReference>
<dbReference type="InterPro" id="IPR016174">
    <property type="entry name" value="Di-haem_cyt_TM"/>
</dbReference>
<dbReference type="PANTHER" id="PTHR19271">
    <property type="entry name" value="CYTOCHROME B"/>
    <property type="match status" value="1"/>
</dbReference>
<dbReference type="PANTHER" id="PTHR19271:SF16">
    <property type="entry name" value="CYTOCHROME B"/>
    <property type="match status" value="1"/>
</dbReference>
<dbReference type="Pfam" id="PF00032">
    <property type="entry name" value="Cytochrom_B_C"/>
    <property type="match status" value="1"/>
</dbReference>
<dbReference type="Pfam" id="PF00033">
    <property type="entry name" value="Cytochrome_B"/>
    <property type="match status" value="1"/>
</dbReference>
<dbReference type="PIRSF" id="PIRSF038885">
    <property type="entry name" value="COB"/>
    <property type="match status" value="1"/>
</dbReference>
<dbReference type="SUPFAM" id="SSF81648">
    <property type="entry name" value="a domain/subunit of cytochrome bc1 complex (Ubiquinol-cytochrome c reductase)"/>
    <property type="match status" value="1"/>
</dbReference>
<dbReference type="SUPFAM" id="SSF81342">
    <property type="entry name" value="Transmembrane di-heme cytochromes"/>
    <property type="match status" value="1"/>
</dbReference>
<dbReference type="PROSITE" id="PS51003">
    <property type="entry name" value="CYTB_CTER"/>
    <property type="match status" value="1"/>
</dbReference>
<dbReference type="PROSITE" id="PS51002">
    <property type="entry name" value="CYTB_NTER"/>
    <property type="match status" value="1"/>
</dbReference>
<sequence>MPHQQILMLFGLLPVATNISTWWNFGSMLLACSTLQVMTGFFLAVHYTANINMAFSSIVHIIRDVPYGWLMQNLHAIGASMFFICIYIHIARGLYYGSYLNKETWLSGTTLLIMLMATAFFGYVLPWGQMSFWAATVITNLLTAIPYLGSTMTTWLWGGFAINDPTLTRFFALHFILPFGIISLSSLHIMLLHEDGSSNPLGTNSDIDKIPFHPYQTYKDLLMLTMMTTLLLMIVSFFPDIFNDPDNFSKANPLVTPQHIKPEWYFLFAYGILRSIPNKLGGALALTMSIMILLTVPFTHTSKLRSMMFRPFMQLMFWTFAATFLVITWTATKPVEPPFTTISQVAALMYFMFFISNPIMGWMENKIMKT</sequence>